<dbReference type="EMBL" id="CP000562">
    <property type="protein sequence ID" value="ABN56516.1"/>
    <property type="molecule type" value="Genomic_DNA"/>
</dbReference>
<dbReference type="RefSeq" id="WP_011843426.1">
    <property type="nucleotide sequence ID" value="NC_009051.1"/>
</dbReference>
<dbReference type="SMR" id="A3CT16"/>
<dbReference type="STRING" id="368407.Memar_0583"/>
<dbReference type="GeneID" id="4848076"/>
<dbReference type="KEGG" id="mem:Memar_0583"/>
<dbReference type="eggNOG" id="arCOG04088">
    <property type="taxonomic scope" value="Archaea"/>
</dbReference>
<dbReference type="HOGENOM" id="CLU_056222_2_0_2"/>
<dbReference type="OrthoDB" id="8644at2157"/>
<dbReference type="Proteomes" id="UP000002146">
    <property type="component" value="Chromosome"/>
</dbReference>
<dbReference type="GO" id="GO:0022625">
    <property type="term" value="C:cytosolic large ribosomal subunit"/>
    <property type="evidence" value="ECO:0007669"/>
    <property type="project" value="TreeGrafter"/>
</dbReference>
<dbReference type="GO" id="GO:0008097">
    <property type="term" value="F:5S rRNA binding"/>
    <property type="evidence" value="ECO:0007669"/>
    <property type="project" value="InterPro"/>
</dbReference>
<dbReference type="GO" id="GO:0003735">
    <property type="term" value="F:structural constituent of ribosome"/>
    <property type="evidence" value="ECO:0007669"/>
    <property type="project" value="InterPro"/>
</dbReference>
<dbReference type="GO" id="GO:0000027">
    <property type="term" value="P:ribosomal large subunit assembly"/>
    <property type="evidence" value="ECO:0007669"/>
    <property type="project" value="TreeGrafter"/>
</dbReference>
<dbReference type="GO" id="GO:0006412">
    <property type="term" value="P:translation"/>
    <property type="evidence" value="ECO:0007669"/>
    <property type="project" value="UniProtKB-UniRule"/>
</dbReference>
<dbReference type="CDD" id="cd00432">
    <property type="entry name" value="Ribosomal_L18_L5e"/>
    <property type="match status" value="1"/>
</dbReference>
<dbReference type="Gene3D" id="3.30.420.100">
    <property type="match status" value="1"/>
</dbReference>
<dbReference type="HAMAP" id="MF_01337_A">
    <property type="entry name" value="Ribosomal_uL18_A"/>
    <property type="match status" value="1"/>
</dbReference>
<dbReference type="InterPro" id="IPR005485">
    <property type="entry name" value="Rbsml_uL18_euk"/>
</dbReference>
<dbReference type="NCBIfam" id="NF006342">
    <property type="entry name" value="PRK08569.1"/>
    <property type="match status" value="1"/>
</dbReference>
<dbReference type="PANTHER" id="PTHR23410:SF12">
    <property type="entry name" value="LARGE RIBOSOMAL SUBUNIT PROTEIN UL18"/>
    <property type="match status" value="1"/>
</dbReference>
<dbReference type="PANTHER" id="PTHR23410">
    <property type="entry name" value="RIBOSOMAL PROTEIN L5-RELATED"/>
    <property type="match status" value="1"/>
</dbReference>
<dbReference type="Pfam" id="PF17144">
    <property type="entry name" value="Ribosomal_L5e"/>
    <property type="match status" value="2"/>
</dbReference>
<dbReference type="SUPFAM" id="SSF53137">
    <property type="entry name" value="Translational machinery components"/>
    <property type="match status" value="1"/>
</dbReference>
<protein>
    <recommendedName>
        <fullName evidence="1">Large ribosomal subunit protein uL18</fullName>
    </recommendedName>
    <alternativeName>
        <fullName evidence="2">50S ribosomal protein L18</fullName>
    </alternativeName>
</protein>
<name>RL18_METMJ</name>
<reference key="1">
    <citation type="journal article" date="2009" name="Stand. Genomic Sci.">
        <title>Complete genome sequence of Methanoculleus marisnigri Romesser et al. 1981 type strain JR1.</title>
        <authorList>
            <person name="Anderson I.J."/>
            <person name="Sieprawska-Lupa M."/>
            <person name="Lapidus A."/>
            <person name="Nolan M."/>
            <person name="Copeland A."/>
            <person name="Glavina Del Rio T."/>
            <person name="Tice H."/>
            <person name="Dalin E."/>
            <person name="Barry K."/>
            <person name="Saunders E."/>
            <person name="Han C."/>
            <person name="Brettin T."/>
            <person name="Detter J.C."/>
            <person name="Bruce D."/>
            <person name="Mikhailova N."/>
            <person name="Pitluck S."/>
            <person name="Hauser L."/>
            <person name="Land M."/>
            <person name="Lucas S."/>
            <person name="Richardson P."/>
            <person name="Whitman W.B."/>
            <person name="Kyrpides N.C."/>
        </authorList>
    </citation>
    <scope>NUCLEOTIDE SEQUENCE [LARGE SCALE GENOMIC DNA]</scope>
    <source>
        <strain>ATCC 35101 / DSM 1498 / JR1</strain>
    </source>
</reference>
<keyword id="KW-0687">Ribonucleoprotein</keyword>
<keyword id="KW-0689">Ribosomal protein</keyword>
<keyword id="KW-0694">RNA-binding</keyword>
<keyword id="KW-0699">rRNA-binding</keyword>
<accession>A3CT16</accession>
<feature type="chain" id="PRO_1000053059" description="Large ribosomal subunit protein uL18">
    <location>
        <begin position="1"/>
        <end position="175"/>
    </location>
</feature>
<proteinExistence type="inferred from homology"/>
<comment type="function">
    <text evidence="1">This is one of the proteins that bind and probably mediate the attachment of the 5S RNA into the large ribosomal subunit, where it forms part of the central protuberance.</text>
</comment>
<comment type="subunit">
    <text evidence="1">Part of the 50S ribosomal subunit. Contacts the 5S and 23S rRNAs.</text>
</comment>
<comment type="similarity">
    <text evidence="1">Belongs to the universal ribosomal protein uL18 family.</text>
</comment>
<evidence type="ECO:0000255" key="1">
    <source>
        <dbReference type="HAMAP-Rule" id="MF_01337"/>
    </source>
</evidence>
<evidence type="ECO:0000305" key="2"/>
<organism>
    <name type="scientific">Methanoculleus marisnigri (strain ATCC 35101 / DSM 1498 / JR1)</name>
    <dbReference type="NCBI Taxonomy" id="368407"/>
    <lineage>
        <taxon>Archaea</taxon>
        <taxon>Methanobacteriati</taxon>
        <taxon>Methanobacteriota</taxon>
        <taxon>Stenosarchaea group</taxon>
        <taxon>Methanomicrobia</taxon>
        <taxon>Methanomicrobiales</taxon>
        <taxon>Methanomicrobiaceae</taxon>
        <taxon>Methanoculleus</taxon>
    </lineage>
</organism>
<sequence length="175" mass="18749">MATGPRYFVPFRRRHEGKTDYYKRMSLLSSGTPRMVVRKTNRQIIVQLVVPEVEGDSTLVAAYSAELAGYGYEGSTASTPAAYLTGMLFAVKALNAGYGEAILDIGLARAKPGARVFAALKGAVDAGLDVPYGESILPDEERLKGAHIAEYAPERAGDLVTNVEAVALAIKKELV</sequence>
<gene>
    <name evidence="1" type="primary">rpl18</name>
    <name type="ordered locus">Memar_0583</name>
</gene>